<keyword id="KW-1003">Cell membrane</keyword>
<keyword id="KW-0472">Membrane</keyword>
<keyword id="KW-0812">Transmembrane</keyword>
<keyword id="KW-1133">Transmembrane helix</keyword>
<dbReference type="EMBL" id="BA000018">
    <property type="protein sequence ID" value="BAB41772.1"/>
    <property type="molecule type" value="Genomic_DNA"/>
</dbReference>
<dbReference type="PIR" id="A89827">
    <property type="entry name" value="A89827"/>
</dbReference>
<dbReference type="RefSeq" id="WP_000765183.1">
    <property type="nucleotide sequence ID" value="NC_002745.2"/>
</dbReference>
<dbReference type="EnsemblBacteria" id="BAB41772">
    <property type="protein sequence ID" value="BAB41772"/>
    <property type="gene ID" value="BAB41772"/>
</dbReference>
<dbReference type="KEGG" id="sau:SA0540"/>
<dbReference type="HOGENOM" id="CLU_096548_3_3_9"/>
<dbReference type="GO" id="GO:0005886">
    <property type="term" value="C:plasma membrane"/>
    <property type="evidence" value="ECO:0007669"/>
    <property type="project" value="UniProtKB-SubCell"/>
</dbReference>
<dbReference type="InterPro" id="IPR006696">
    <property type="entry name" value="DUF423"/>
</dbReference>
<dbReference type="PANTHER" id="PTHR43461">
    <property type="entry name" value="TRANSMEMBRANE PROTEIN 256"/>
    <property type="match status" value="1"/>
</dbReference>
<dbReference type="PANTHER" id="PTHR43461:SF1">
    <property type="entry name" value="TRANSMEMBRANE PROTEIN 256"/>
    <property type="match status" value="1"/>
</dbReference>
<dbReference type="Pfam" id="PF04241">
    <property type="entry name" value="DUF423"/>
    <property type="match status" value="1"/>
</dbReference>
<feature type="chain" id="PRO_0000249035" description="UPF0382 membrane protein SA0540">
    <location>
        <begin position="1"/>
        <end position="122"/>
    </location>
</feature>
<feature type="transmembrane region" description="Helical" evidence="1">
    <location>
        <begin position="3"/>
        <end position="23"/>
    </location>
</feature>
<feature type="transmembrane region" description="Helical" evidence="1">
    <location>
        <begin position="46"/>
        <end position="66"/>
    </location>
</feature>
<feature type="transmembrane region" description="Helical" evidence="1">
    <location>
        <begin position="69"/>
        <end position="89"/>
    </location>
</feature>
<feature type="transmembrane region" description="Helical" evidence="1">
    <location>
        <begin position="98"/>
        <end position="118"/>
    </location>
</feature>
<proteinExistence type="inferred from homology"/>
<gene>
    <name type="ordered locus">SA0540</name>
</gene>
<name>Y540_STAAN</name>
<organism>
    <name type="scientific">Staphylococcus aureus (strain N315)</name>
    <dbReference type="NCBI Taxonomy" id="158879"/>
    <lineage>
        <taxon>Bacteria</taxon>
        <taxon>Bacillati</taxon>
        <taxon>Bacillota</taxon>
        <taxon>Bacilli</taxon>
        <taxon>Bacillales</taxon>
        <taxon>Staphylococcaceae</taxon>
        <taxon>Staphylococcus</taxon>
    </lineage>
</organism>
<sequence length="122" mass="13065">MKLFIILGALNAMMAVGTGAFGAHGLQGKISDHYLSVWEKATTYQMYHGLALLIIGVISGTTSINVNWAGWLIFAGIIFFSGSLYILVLTQIKVLGAITPIGGVLFIIGWIMLIIATFKFAG</sequence>
<accession>Q7A763</accession>
<reference key="1">
    <citation type="journal article" date="2001" name="Lancet">
        <title>Whole genome sequencing of meticillin-resistant Staphylococcus aureus.</title>
        <authorList>
            <person name="Kuroda M."/>
            <person name="Ohta T."/>
            <person name="Uchiyama I."/>
            <person name="Baba T."/>
            <person name="Yuzawa H."/>
            <person name="Kobayashi I."/>
            <person name="Cui L."/>
            <person name="Oguchi A."/>
            <person name="Aoki K."/>
            <person name="Nagai Y."/>
            <person name="Lian J.-Q."/>
            <person name="Ito T."/>
            <person name="Kanamori M."/>
            <person name="Matsumaru H."/>
            <person name="Maruyama A."/>
            <person name="Murakami H."/>
            <person name="Hosoyama A."/>
            <person name="Mizutani-Ui Y."/>
            <person name="Takahashi N.K."/>
            <person name="Sawano T."/>
            <person name="Inoue R."/>
            <person name="Kaito C."/>
            <person name="Sekimizu K."/>
            <person name="Hirakawa H."/>
            <person name="Kuhara S."/>
            <person name="Goto S."/>
            <person name="Yabuzaki J."/>
            <person name="Kanehisa M."/>
            <person name="Yamashita A."/>
            <person name="Oshima K."/>
            <person name="Furuya K."/>
            <person name="Yoshino C."/>
            <person name="Shiba T."/>
            <person name="Hattori M."/>
            <person name="Ogasawara N."/>
            <person name="Hayashi H."/>
            <person name="Hiramatsu K."/>
        </authorList>
    </citation>
    <scope>NUCLEOTIDE SEQUENCE [LARGE SCALE GENOMIC DNA]</scope>
    <source>
        <strain>N315</strain>
    </source>
</reference>
<protein>
    <recommendedName>
        <fullName>UPF0382 membrane protein SA0540</fullName>
    </recommendedName>
</protein>
<evidence type="ECO:0000255" key="1"/>
<evidence type="ECO:0000305" key="2"/>
<comment type="subcellular location">
    <subcellularLocation>
        <location evidence="2">Cell membrane</location>
        <topology evidence="2">Multi-pass membrane protein</topology>
    </subcellularLocation>
</comment>
<comment type="similarity">
    <text evidence="2">Belongs to the UPF0382 family.</text>
</comment>